<organism>
    <name type="scientific">Xylella fastidiosa (strain Temecula1 / ATCC 700964)</name>
    <dbReference type="NCBI Taxonomy" id="183190"/>
    <lineage>
        <taxon>Bacteria</taxon>
        <taxon>Pseudomonadati</taxon>
        <taxon>Pseudomonadota</taxon>
        <taxon>Gammaproteobacteria</taxon>
        <taxon>Lysobacterales</taxon>
        <taxon>Lysobacteraceae</taxon>
        <taxon>Xylella</taxon>
    </lineage>
</organism>
<gene>
    <name evidence="1" type="primary">aspS</name>
    <name type="ordered locus">PD_0946</name>
</gene>
<dbReference type="EC" id="6.1.1.12" evidence="1"/>
<dbReference type="EMBL" id="AE009442">
    <property type="protein sequence ID" value="AAO28810.1"/>
    <property type="molecule type" value="Genomic_DNA"/>
</dbReference>
<dbReference type="RefSeq" id="WP_004089732.1">
    <property type="nucleotide sequence ID" value="NC_004556.1"/>
</dbReference>
<dbReference type="SMR" id="Q87CW0"/>
<dbReference type="GeneID" id="93904724"/>
<dbReference type="KEGG" id="xft:PD_0946"/>
<dbReference type="HOGENOM" id="CLU_014330_3_2_6"/>
<dbReference type="Proteomes" id="UP000002516">
    <property type="component" value="Chromosome"/>
</dbReference>
<dbReference type="GO" id="GO:0005737">
    <property type="term" value="C:cytoplasm"/>
    <property type="evidence" value="ECO:0007669"/>
    <property type="project" value="UniProtKB-SubCell"/>
</dbReference>
<dbReference type="GO" id="GO:0004815">
    <property type="term" value="F:aspartate-tRNA ligase activity"/>
    <property type="evidence" value="ECO:0007669"/>
    <property type="project" value="UniProtKB-UniRule"/>
</dbReference>
<dbReference type="GO" id="GO:0005524">
    <property type="term" value="F:ATP binding"/>
    <property type="evidence" value="ECO:0007669"/>
    <property type="project" value="UniProtKB-UniRule"/>
</dbReference>
<dbReference type="GO" id="GO:0003676">
    <property type="term" value="F:nucleic acid binding"/>
    <property type="evidence" value="ECO:0007669"/>
    <property type="project" value="InterPro"/>
</dbReference>
<dbReference type="GO" id="GO:0006422">
    <property type="term" value="P:aspartyl-tRNA aminoacylation"/>
    <property type="evidence" value="ECO:0007669"/>
    <property type="project" value="UniProtKB-UniRule"/>
</dbReference>
<dbReference type="CDD" id="cd00777">
    <property type="entry name" value="AspRS_core"/>
    <property type="match status" value="1"/>
</dbReference>
<dbReference type="CDD" id="cd04317">
    <property type="entry name" value="EcAspRS_like_N"/>
    <property type="match status" value="1"/>
</dbReference>
<dbReference type="Gene3D" id="3.30.930.10">
    <property type="entry name" value="Bira Bifunctional Protein, Domain 2"/>
    <property type="match status" value="1"/>
</dbReference>
<dbReference type="Gene3D" id="3.30.1360.30">
    <property type="entry name" value="GAD-like domain"/>
    <property type="match status" value="1"/>
</dbReference>
<dbReference type="Gene3D" id="2.40.50.140">
    <property type="entry name" value="Nucleic acid-binding proteins"/>
    <property type="match status" value="1"/>
</dbReference>
<dbReference type="HAMAP" id="MF_00044">
    <property type="entry name" value="Asp_tRNA_synth_type1"/>
    <property type="match status" value="1"/>
</dbReference>
<dbReference type="InterPro" id="IPR004364">
    <property type="entry name" value="Aa-tRNA-synt_II"/>
</dbReference>
<dbReference type="InterPro" id="IPR006195">
    <property type="entry name" value="aa-tRNA-synth_II"/>
</dbReference>
<dbReference type="InterPro" id="IPR045864">
    <property type="entry name" value="aa-tRNA-synth_II/BPL/LPL"/>
</dbReference>
<dbReference type="InterPro" id="IPR004524">
    <property type="entry name" value="Asp-tRNA-ligase_1"/>
</dbReference>
<dbReference type="InterPro" id="IPR047089">
    <property type="entry name" value="Asp-tRNA-ligase_1_N"/>
</dbReference>
<dbReference type="InterPro" id="IPR002312">
    <property type="entry name" value="Asp/Asn-tRNA-synth_IIb"/>
</dbReference>
<dbReference type="InterPro" id="IPR047090">
    <property type="entry name" value="AspRS_core"/>
</dbReference>
<dbReference type="InterPro" id="IPR004115">
    <property type="entry name" value="GAD-like_sf"/>
</dbReference>
<dbReference type="InterPro" id="IPR029351">
    <property type="entry name" value="GAD_dom"/>
</dbReference>
<dbReference type="InterPro" id="IPR012340">
    <property type="entry name" value="NA-bd_OB-fold"/>
</dbReference>
<dbReference type="InterPro" id="IPR004365">
    <property type="entry name" value="NA-bd_OB_tRNA"/>
</dbReference>
<dbReference type="NCBIfam" id="TIGR00459">
    <property type="entry name" value="aspS_bact"/>
    <property type="match status" value="1"/>
</dbReference>
<dbReference type="NCBIfam" id="NF001750">
    <property type="entry name" value="PRK00476.1"/>
    <property type="match status" value="1"/>
</dbReference>
<dbReference type="PANTHER" id="PTHR22594:SF5">
    <property type="entry name" value="ASPARTATE--TRNA LIGASE, MITOCHONDRIAL"/>
    <property type="match status" value="1"/>
</dbReference>
<dbReference type="PANTHER" id="PTHR22594">
    <property type="entry name" value="ASPARTYL/LYSYL-TRNA SYNTHETASE"/>
    <property type="match status" value="1"/>
</dbReference>
<dbReference type="Pfam" id="PF02938">
    <property type="entry name" value="GAD"/>
    <property type="match status" value="1"/>
</dbReference>
<dbReference type="Pfam" id="PF00152">
    <property type="entry name" value="tRNA-synt_2"/>
    <property type="match status" value="1"/>
</dbReference>
<dbReference type="Pfam" id="PF01336">
    <property type="entry name" value="tRNA_anti-codon"/>
    <property type="match status" value="1"/>
</dbReference>
<dbReference type="PRINTS" id="PR01042">
    <property type="entry name" value="TRNASYNTHASP"/>
</dbReference>
<dbReference type="SUPFAM" id="SSF55681">
    <property type="entry name" value="Class II aaRS and biotin synthetases"/>
    <property type="match status" value="1"/>
</dbReference>
<dbReference type="SUPFAM" id="SSF55261">
    <property type="entry name" value="GAD domain-like"/>
    <property type="match status" value="1"/>
</dbReference>
<dbReference type="SUPFAM" id="SSF50249">
    <property type="entry name" value="Nucleic acid-binding proteins"/>
    <property type="match status" value="1"/>
</dbReference>
<dbReference type="PROSITE" id="PS50862">
    <property type="entry name" value="AA_TRNA_LIGASE_II"/>
    <property type="match status" value="1"/>
</dbReference>
<evidence type="ECO:0000255" key="1">
    <source>
        <dbReference type="HAMAP-Rule" id="MF_00044"/>
    </source>
</evidence>
<sequence>MRTHFCGLINETLIGHTVTLAGWTDVARNLGGVCFIDLRDHEGIVQITVDSRAIDQNNSELFRVASGLSYEDVLQVEGVVHARHAVNDKIKTGKVEVIATKIKILNKAAPLPFHAHENPGEDIRLKYRYLDLRRPEMQRMQRTRIKLVQALRRHLDMHGFQDIETPILTKATPEGARDFLVPARMHPGEFYALPQSPQLFKQILMVAGFDRYYQIARCFRDEALRADRQLEFTQLDMEFAFVSERDVQDFVEEMIRRVFKEVAGIELDTTFPRMTWKEAMRRFGSDKPDMRINLELIDVAALVADSTFTPFTNAVAHPNGRVAALRIPRGAVLSRKQIDEYAAYTAKYGATGLAYAKLAPTGEITSPIAKFFSEDAFAALLSHIGAEKGDIVFFGAGNYNKVSDFMGALRLKAGKDFALITADWRPLWVTDFPMFEWDEEAQRYVALHHPFTAPAAINDIDELRTHARTALSRGYDMVLNGNEIGGGSIRIHRPEMQRAVFELLGITEDEARAKFGFLLDALNYGAPPHGGIAFGIDRIAALIAGTESIRDVIPFPKTTGAQCLMTDAPSPISEEQLSEIHVITKKLTP</sequence>
<name>SYD_XYLFT</name>
<feature type="chain" id="PRO_0000110985" description="Aspartate--tRNA ligase">
    <location>
        <begin position="1"/>
        <end position="589"/>
    </location>
</feature>
<feature type="region of interest" description="Aspartate" evidence="1">
    <location>
        <begin position="198"/>
        <end position="201"/>
    </location>
</feature>
<feature type="binding site" evidence="1">
    <location>
        <position position="174"/>
    </location>
    <ligand>
        <name>L-aspartate</name>
        <dbReference type="ChEBI" id="CHEBI:29991"/>
    </ligand>
</feature>
<feature type="binding site" evidence="1">
    <location>
        <begin position="220"/>
        <end position="222"/>
    </location>
    <ligand>
        <name>ATP</name>
        <dbReference type="ChEBI" id="CHEBI:30616"/>
    </ligand>
</feature>
<feature type="binding site" evidence="1">
    <location>
        <position position="220"/>
    </location>
    <ligand>
        <name>L-aspartate</name>
        <dbReference type="ChEBI" id="CHEBI:29991"/>
    </ligand>
</feature>
<feature type="binding site" evidence="1">
    <location>
        <position position="229"/>
    </location>
    <ligand>
        <name>ATP</name>
        <dbReference type="ChEBI" id="CHEBI:30616"/>
    </ligand>
</feature>
<feature type="binding site" evidence="1">
    <location>
        <position position="448"/>
    </location>
    <ligand>
        <name>L-aspartate</name>
        <dbReference type="ChEBI" id="CHEBI:29991"/>
    </ligand>
</feature>
<feature type="binding site" evidence="1">
    <location>
        <position position="483"/>
    </location>
    <ligand>
        <name>ATP</name>
        <dbReference type="ChEBI" id="CHEBI:30616"/>
    </ligand>
</feature>
<feature type="binding site" evidence="1">
    <location>
        <position position="490"/>
    </location>
    <ligand>
        <name>L-aspartate</name>
        <dbReference type="ChEBI" id="CHEBI:29991"/>
    </ligand>
</feature>
<feature type="binding site" evidence="1">
    <location>
        <begin position="535"/>
        <end position="538"/>
    </location>
    <ligand>
        <name>ATP</name>
        <dbReference type="ChEBI" id="CHEBI:30616"/>
    </ligand>
</feature>
<reference key="1">
    <citation type="journal article" date="2003" name="J. Bacteriol.">
        <title>Comparative analyses of the complete genome sequences of Pierce's disease and citrus variegated chlorosis strains of Xylella fastidiosa.</title>
        <authorList>
            <person name="Van Sluys M.A."/>
            <person name="de Oliveira M.C."/>
            <person name="Monteiro-Vitorello C.B."/>
            <person name="Miyaki C.Y."/>
            <person name="Furlan L.R."/>
            <person name="Camargo L.E.A."/>
            <person name="da Silva A.C.R."/>
            <person name="Moon D.H."/>
            <person name="Takita M.A."/>
            <person name="Lemos E.G.M."/>
            <person name="Machado M.A."/>
            <person name="Ferro M.I.T."/>
            <person name="da Silva F.R."/>
            <person name="Goldman M.H.S."/>
            <person name="Goldman G.H."/>
            <person name="Lemos M.V.F."/>
            <person name="El-Dorry H."/>
            <person name="Tsai S.M."/>
            <person name="Carrer H."/>
            <person name="Carraro D.M."/>
            <person name="de Oliveira R.C."/>
            <person name="Nunes L.R."/>
            <person name="Siqueira W.J."/>
            <person name="Coutinho L.L."/>
            <person name="Kimura E.T."/>
            <person name="Ferro E.S."/>
            <person name="Harakava R."/>
            <person name="Kuramae E.E."/>
            <person name="Marino C.L."/>
            <person name="Giglioti E."/>
            <person name="Abreu I.L."/>
            <person name="Alves L.M.C."/>
            <person name="do Amaral A.M."/>
            <person name="Baia G.S."/>
            <person name="Blanco S.R."/>
            <person name="Brito M.S."/>
            <person name="Cannavan F.S."/>
            <person name="Celestino A.V."/>
            <person name="da Cunha A.F."/>
            <person name="Fenille R.C."/>
            <person name="Ferro J.A."/>
            <person name="Formighieri E.F."/>
            <person name="Kishi L.T."/>
            <person name="Leoni S.G."/>
            <person name="Oliveira A.R."/>
            <person name="Rosa V.E. Jr."/>
            <person name="Sassaki F.T."/>
            <person name="Sena J.A.D."/>
            <person name="de Souza A.A."/>
            <person name="Truffi D."/>
            <person name="Tsukumo F."/>
            <person name="Yanai G.M."/>
            <person name="Zaros L.G."/>
            <person name="Civerolo E.L."/>
            <person name="Simpson A.J.G."/>
            <person name="Almeida N.F. Jr."/>
            <person name="Setubal J.C."/>
            <person name="Kitajima J.P."/>
        </authorList>
    </citation>
    <scope>NUCLEOTIDE SEQUENCE [LARGE SCALE GENOMIC DNA]</scope>
    <source>
        <strain>Temecula1 / ATCC 700964</strain>
    </source>
</reference>
<comment type="function">
    <text evidence="1">Catalyzes the attachment of L-aspartate to tRNA(Asp) in a two-step reaction: L-aspartate is first activated by ATP to form Asp-AMP and then transferred to the acceptor end of tRNA(Asp).</text>
</comment>
<comment type="catalytic activity">
    <reaction evidence="1">
        <text>tRNA(Asp) + L-aspartate + ATP = L-aspartyl-tRNA(Asp) + AMP + diphosphate</text>
        <dbReference type="Rhea" id="RHEA:19649"/>
        <dbReference type="Rhea" id="RHEA-COMP:9660"/>
        <dbReference type="Rhea" id="RHEA-COMP:9678"/>
        <dbReference type="ChEBI" id="CHEBI:29991"/>
        <dbReference type="ChEBI" id="CHEBI:30616"/>
        <dbReference type="ChEBI" id="CHEBI:33019"/>
        <dbReference type="ChEBI" id="CHEBI:78442"/>
        <dbReference type="ChEBI" id="CHEBI:78516"/>
        <dbReference type="ChEBI" id="CHEBI:456215"/>
        <dbReference type="EC" id="6.1.1.12"/>
    </reaction>
</comment>
<comment type="subunit">
    <text evidence="1">Homodimer.</text>
</comment>
<comment type="subcellular location">
    <subcellularLocation>
        <location evidence="1">Cytoplasm</location>
    </subcellularLocation>
</comment>
<comment type="similarity">
    <text evidence="1">Belongs to the class-II aminoacyl-tRNA synthetase family. Type 1 subfamily.</text>
</comment>
<accession>Q87CW0</accession>
<protein>
    <recommendedName>
        <fullName evidence="1">Aspartate--tRNA ligase</fullName>
        <ecNumber evidence="1">6.1.1.12</ecNumber>
    </recommendedName>
    <alternativeName>
        <fullName evidence="1">Aspartyl-tRNA synthetase</fullName>
        <shortName evidence="1">AspRS</shortName>
    </alternativeName>
</protein>
<keyword id="KW-0030">Aminoacyl-tRNA synthetase</keyword>
<keyword id="KW-0067">ATP-binding</keyword>
<keyword id="KW-0963">Cytoplasm</keyword>
<keyword id="KW-0436">Ligase</keyword>
<keyword id="KW-0547">Nucleotide-binding</keyword>
<keyword id="KW-0648">Protein biosynthesis</keyword>
<keyword id="KW-1185">Reference proteome</keyword>
<proteinExistence type="inferred from homology"/>